<feature type="signal peptide" evidence="2">
    <location>
        <begin position="1"/>
        <end position="20"/>
    </location>
</feature>
<feature type="chain" id="PRO_0000455359" description="FAD-dependent monooxygenase verC1" evidence="2">
    <location>
        <begin position="21"/>
        <end position="805"/>
    </location>
</feature>
<feature type="transmembrane region" description="Helical" evidence="2">
    <location>
        <begin position="551"/>
        <end position="571"/>
    </location>
</feature>
<feature type="transmembrane region" description="Helical" evidence="2">
    <location>
        <begin position="604"/>
        <end position="624"/>
    </location>
</feature>
<feature type="transmembrane region" description="Helical" evidence="2">
    <location>
        <begin position="632"/>
        <end position="652"/>
    </location>
</feature>
<feature type="transmembrane region" description="Helical" evidence="2">
    <location>
        <begin position="671"/>
        <end position="691"/>
    </location>
</feature>
<feature type="transmembrane region" description="Helical" evidence="2">
    <location>
        <begin position="703"/>
        <end position="723"/>
    </location>
</feature>
<feature type="transmembrane region" description="Helical" evidence="2">
    <location>
        <begin position="726"/>
        <end position="746"/>
    </location>
</feature>
<feature type="transmembrane region" description="Helical" evidence="2">
    <location>
        <begin position="761"/>
        <end position="781"/>
    </location>
</feature>
<feature type="active site" evidence="1">
    <location>
        <position position="214"/>
    </location>
</feature>
<feature type="binding site" evidence="1">
    <location>
        <position position="32"/>
    </location>
    <ligand>
        <name>FAD</name>
        <dbReference type="ChEBI" id="CHEBI:57692"/>
    </ligand>
</feature>
<feature type="binding site" evidence="1">
    <location>
        <position position="46"/>
    </location>
    <ligand>
        <name>FAD</name>
        <dbReference type="ChEBI" id="CHEBI:57692"/>
    </ligand>
</feature>
<feature type="binding site" evidence="1">
    <location>
        <position position="107"/>
    </location>
    <ligand>
        <name>FAD</name>
        <dbReference type="ChEBI" id="CHEBI:57692"/>
    </ligand>
</feature>
<feature type="binding site" evidence="1">
    <location>
        <position position="306"/>
    </location>
    <ligand>
        <name>FAD</name>
        <dbReference type="ChEBI" id="CHEBI:57692"/>
    </ligand>
</feature>
<feature type="binding site" evidence="1">
    <location>
        <position position="319"/>
    </location>
    <ligand>
        <name>FAD</name>
        <dbReference type="ChEBI" id="CHEBI:57692"/>
    </ligand>
</feature>
<feature type="glycosylation site" description="N-linked (GlcNAc...) asparagine" evidence="3">
    <location>
        <position position="132"/>
    </location>
</feature>
<proteinExistence type="inferred from homology"/>
<evidence type="ECO:0000250" key="1">
    <source>
        <dbReference type="UniProtKB" id="B8M9J8"/>
    </source>
</evidence>
<evidence type="ECO:0000255" key="2"/>
<evidence type="ECO:0000255" key="3">
    <source>
        <dbReference type="PROSITE-ProRule" id="PRU00498"/>
    </source>
</evidence>
<evidence type="ECO:0000269" key="4">
    <source>
    </source>
</evidence>
<evidence type="ECO:0000303" key="5">
    <source>
    </source>
</evidence>
<evidence type="ECO:0000305" key="6"/>
<evidence type="ECO:0000305" key="7">
    <source>
    </source>
</evidence>
<keyword id="KW-0274">FAD</keyword>
<keyword id="KW-0285">Flavoprotein</keyword>
<keyword id="KW-0325">Glycoprotein</keyword>
<keyword id="KW-0472">Membrane</keyword>
<keyword id="KW-0503">Monooxygenase</keyword>
<keyword id="KW-0560">Oxidoreductase</keyword>
<keyword id="KW-1185">Reference proteome</keyword>
<keyword id="KW-0732">Signal</keyword>
<keyword id="KW-0812">Transmembrane</keyword>
<keyword id="KW-1133">Transmembrane helix</keyword>
<protein>
    <recommendedName>
        <fullName evidence="5">FAD-dependent monooxygenase verC1</fullName>
        <ecNumber evidence="7">1.-.-.-</ecNumber>
    </recommendedName>
    <alternativeName>
        <fullName evidence="5">Cluster 4 protein C1</fullName>
    </alternativeName>
    <alternativeName>
        <fullName evidence="5">Verrucosidin biosynthesis cluster protein C1</fullName>
    </alternativeName>
</protein>
<comment type="function">
    <text evidence="4 7">FAD-dependent monooxygenase; part of the gene cluster that mediates the biosynthesis of the neurotoxin verrucosidin, a methylated alpha-pyrone polyketide that inhibits oxidative phosphorylation in mitochondria and thereby causes neurological diseases (PubMed:34093475). The carbon backbone of verrucosidin is synthesized by the HR-PKS verA, and further modified by the other verrucodidin cluster enzymes (Probable).</text>
</comment>
<comment type="pathway">
    <text evidence="7">Secondary metabolite biosynthesis; terpenoid biosynthesis.</text>
</comment>
<comment type="pathway">
    <text evidence="7">Mycotoxin biosynthesis.</text>
</comment>
<comment type="subcellular location">
    <subcellularLocation>
        <location evidence="2">Membrane</location>
        <topology evidence="2">Multi-pass membrane protein</topology>
    </subcellularLocation>
</comment>
<comment type="similarity">
    <text evidence="6">Belongs to the paxM FAD-dependent monooxygenase family.</text>
</comment>
<accession>A0A1V6NWP3</accession>
<sequence length="805" mass="89545">MTFRVIIVGGGVAGLTLASAFEKAGIDYILLECRPAFDVAVGASIALSPNGARILDQLGAWEKWLKIAQPLVRWGDRNSKGELIMPRSASTPLAKALTGYDMTFGLRRSLLQTLYDNIEDKSMLLPKKSVINVTCSQEGVAVQCADGCSYEGDILVGADGTYSKVREYMWRLADRDEPGLMDPDKKAMTAEYQCLFGISKASGSIAIGDADFIYDHDRSSFIFSDNCGRICYFILQKMDRVYEMVEIPRFSQANAQAYAQRHADIQIRPDLTFGNLYEHSESSILVALEEAKFKQWSWGRIVCVGDSIHKMTPNLGAGASASIESAAALLNSIKAMFDHSPEEGPTETQIRECFAQYQKSREVRATAIVDASSMTTRLQALRGWFEFLFVRLGMPIMGSFAADMASEIWVGATMLENLAPPKASLRGTLPFNPTQGQGQRESKLKRALLGLPFLALLLVAKTATDAKYASALRGYIWESGGMTSAMGSVPLLQRFYSMKGVGDLWSLRYINYLPDFYETNYESLSQAVSSSIDVGIVMSIWSFESIRRANALTMAQIPTLFTFYGQMAGLGRVSPLYYILYYINSPIEVFKGADMRLMHLNYAIAVLPAIIVSYYIPLSAAFFWPTVSGRKSWLFVWQMHPIWTAITLYLFSRIFPSTVKEDRVHGLRRDLPVIKFSMTVLVIGAAGFWMWSRWTSPSSVARVFFPTAVPSTQAPFAACVCAILKWDMLSTFGSTFLWLGYLIWDLKYAGMMQATWVRVAIYGVAAFVALGPGAAIGLGWLWRENILAHKRHKDAVTEENLAQTR</sequence>
<reference key="1">
    <citation type="journal article" date="2017" name="Nat. Microbiol.">
        <title>Global analysis of biosynthetic gene clusters reveals vast potential of secondary metabolite production in Penicillium species.</title>
        <authorList>
            <person name="Nielsen J.C."/>
            <person name="Grijseels S."/>
            <person name="Prigent S."/>
            <person name="Ji B."/>
            <person name="Dainat J."/>
            <person name="Nielsen K.F."/>
            <person name="Frisvad J.C."/>
            <person name="Workman M."/>
            <person name="Nielsen J."/>
        </authorList>
    </citation>
    <scope>NUCLEOTIDE SEQUENCE [LARGE SCALE GENOMIC DNA]</scope>
    <source>
        <strain>IBT 4502</strain>
    </source>
</reference>
<reference key="2">
    <citation type="journal article" date="2021" name="Front. Microbiol.">
        <title>CRISPR-Cas9-Based Discovery of the Verrucosidin Biosynthesis Gene Cluster in Penicillium polonicum.</title>
        <authorList>
            <person name="Valente S."/>
            <person name="Piombo E."/>
            <person name="Schroeckh V."/>
            <person name="Meloni G.R."/>
            <person name="Heinekamp T."/>
            <person name="Brakhage A.A."/>
            <person name="Spadaro D."/>
        </authorList>
    </citation>
    <scope>FUNCTION</scope>
</reference>
<name>VERC1_PENPO</name>
<gene>
    <name evidence="5" type="primary">verC1</name>
    <name evidence="5" type="synonym">cl4C1</name>
    <name type="ORF">PENPOL_c002G07872</name>
</gene>
<organism>
    <name type="scientific">Penicillium polonicum</name>
    <dbReference type="NCBI Taxonomy" id="60169"/>
    <lineage>
        <taxon>Eukaryota</taxon>
        <taxon>Fungi</taxon>
        <taxon>Dikarya</taxon>
        <taxon>Ascomycota</taxon>
        <taxon>Pezizomycotina</taxon>
        <taxon>Eurotiomycetes</taxon>
        <taxon>Eurotiomycetidae</taxon>
        <taxon>Eurotiales</taxon>
        <taxon>Aspergillaceae</taxon>
        <taxon>Penicillium</taxon>
    </lineage>
</organism>
<dbReference type="EC" id="1.-.-.-" evidence="7"/>
<dbReference type="EMBL" id="MDYM01000002">
    <property type="protein sequence ID" value="OQD69144.1"/>
    <property type="molecule type" value="Genomic_DNA"/>
</dbReference>
<dbReference type="SMR" id="A0A1V6NWP3"/>
<dbReference type="STRING" id="60169.A0A1V6NWP3"/>
<dbReference type="GlyCosmos" id="A0A1V6NWP3">
    <property type="glycosylation" value="1 site, No reported glycans"/>
</dbReference>
<dbReference type="OrthoDB" id="35051at5073"/>
<dbReference type="UniPathway" id="UPA00213"/>
<dbReference type="Proteomes" id="UP000191408">
    <property type="component" value="Unassembled WGS sequence"/>
</dbReference>
<dbReference type="GO" id="GO:0016020">
    <property type="term" value="C:membrane"/>
    <property type="evidence" value="ECO:0007669"/>
    <property type="project" value="UniProtKB-SubCell"/>
</dbReference>
<dbReference type="GO" id="GO:0071949">
    <property type="term" value="F:FAD binding"/>
    <property type="evidence" value="ECO:0007669"/>
    <property type="project" value="InterPro"/>
</dbReference>
<dbReference type="GO" id="GO:0004497">
    <property type="term" value="F:monooxygenase activity"/>
    <property type="evidence" value="ECO:0007669"/>
    <property type="project" value="UniProtKB-KW"/>
</dbReference>
<dbReference type="GO" id="GO:0016114">
    <property type="term" value="P:terpenoid biosynthetic process"/>
    <property type="evidence" value="ECO:0007669"/>
    <property type="project" value="UniProtKB-UniPathway"/>
</dbReference>
<dbReference type="Gene3D" id="3.50.50.60">
    <property type="entry name" value="FAD/NAD(P)-binding domain"/>
    <property type="match status" value="1"/>
</dbReference>
<dbReference type="InterPro" id="IPR002938">
    <property type="entry name" value="FAD-bd"/>
</dbReference>
<dbReference type="InterPro" id="IPR036188">
    <property type="entry name" value="FAD/NAD-bd_sf"/>
</dbReference>
<dbReference type="InterPro" id="IPR050562">
    <property type="entry name" value="FAD_mOase_fung"/>
</dbReference>
<dbReference type="PANTHER" id="PTHR47356:SF2">
    <property type="entry name" value="FAD-BINDING DOMAIN-CONTAINING PROTEIN-RELATED"/>
    <property type="match status" value="1"/>
</dbReference>
<dbReference type="PANTHER" id="PTHR47356">
    <property type="entry name" value="FAD-DEPENDENT MONOOXYGENASE ASQG-RELATED"/>
    <property type="match status" value="1"/>
</dbReference>
<dbReference type="Pfam" id="PF01494">
    <property type="entry name" value="FAD_binding_3"/>
    <property type="match status" value="2"/>
</dbReference>
<dbReference type="PRINTS" id="PR00420">
    <property type="entry name" value="RNGMNOXGNASE"/>
</dbReference>
<dbReference type="SUPFAM" id="SSF51905">
    <property type="entry name" value="FAD/NAD(P)-binding domain"/>
    <property type="match status" value="1"/>
</dbReference>